<keyword id="KW-0408">Iron</keyword>
<organism>
    <name type="scientific">Pseudomonas aeruginosa (strain LESB58)</name>
    <dbReference type="NCBI Taxonomy" id="557722"/>
    <lineage>
        <taxon>Bacteria</taxon>
        <taxon>Pseudomonadati</taxon>
        <taxon>Pseudomonadota</taxon>
        <taxon>Gammaproteobacteria</taxon>
        <taxon>Pseudomonadales</taxon>
        <taxon>Pseudomonadaceae</taxon>
        <taxon>Pseudomonas</taxon>
    </lineage>
</organism>
<proteinExistence type="inferred from homology"/>
<dbReference type="EMBL" id="FM209186">
    <property type="protein sequence ID" value="CAW30293.1"/>
    <property type="molecule type" value="Genomic_DNA"/>
</dbReference>
<dbReference type="RefSeq" id="WP_003096100.1">
    <property type="nucleotide sequence ID" value="NC_011770.1"/>
</dbReference>
<dbReference type="SMR" id="B7V3P2"/>
<dbReference type="KEGG" id="pag:PLES_55391"/>
<dbReference type="HOGENOM" id="CLU_170994_0_0_6"/>
<dbReference type="GO" id="GO:0005829">
    <property type="term" value="C:cytosol"/>
    <property type="evidence" value="ECO:0007669"/>
    <property type="project" value="TreeGrafter"/>
</dbReference>
<dbReference type="GO" id="GO:0005506">
    <property type="term" value="F:iron ion binding"/>
    <property type="evidence" value="ECO:0007669"/>
    <property type="project" value="UniProtKB-UniRule"/>
</dbReference>
<dbReference type="GO" id="GO:0034599">
    <property type="term" value="P:cellular response to oxidative stress"/>
    <property type="evidence" value="ECO:0007669"/>
    <property type="project" value="TreeGrafter"/>
</dbReference>
<dbReference type="FunFam" id="1.10.3880.10:FF:000001">
    <property type="entry name" value="Probable Fe(2+)-trafficking protein"/>
    <property type="match status" value="1"/>
</dbReference>
<dbReference type="Gene3D" id="1.10.3880.10">
    <property type="entry name" value="Fe(II) trafficking protein YggX"/>
    <property type="match status" value="1"/>
</dbReference>
<dbReference type="HAMAP" id="MF_00686">
    <property type="entry name" value="Fe_traffic_YggX"/>
    <property type="match status" value="1"/>
</dbReference>
<dbReference type="InterPro" id="IPR007457">
    <property type="entry name" value="Fe_traffick_prot_YggX"/>
</dbReference>
<dbReference type="InterPro" id="IPR036766">
    <property type="entry name" value="Fe_traffick_prot_YggX_sf"/>
</dbReference>
<dbReference type="NCBIfam" id="NF003817">
    <property type="entry name" value="PRK05408.1"/>
    <property type="match status" value="1"/>
</dbReference>
<dbReference type="PANTHER" id="PTHR36965">
    <property type="entry name" value="FE(2+)-TRAFFICKING PROTEIN-RELATED"/>
    <property type="match status" value="1"/>
</dbReference>
<dbReference type="PANTHER" id="PTHR36965:SF1">
    <property type="entry name" value="FE(2+)-TRAFFICKING PROTEIN-RELATED"/>
    <property type="match status" value="1"/>
</dbReference>
<dbReference type="Pfam" id="PF04362">
    <property type="entry name" value="Iron_traffic"/>
    <property type="match status" value="1"/>
</dbReference>
<dbReference type="PIRSF" id="PIRSF029827">
    <property type="entry name" value="Fe_traffic_YggX"/>
    <property type="match status" value="1"/>
</dbReference>
<dbReference type="SUPFAM" id="SSF111148">
    <property type="entry name" value="YggX-like"/>
    <property type="match status" value="1"/>
</dbReference>
<reference key="1">
    <citation type="journal article" date="2009" name="Genome Res.">
        <title>Newly introduced genomic prophage islands are critical determinants of in vivo competitiveness in the Liverpool epidemic strain of Pseudomonas aeruginosa.</title>
        <authorList>
            <person name="Winstanley C."/>
            <person name="Langille M.G.I."/>
            <person name="Fothergill J.L."/>
            <person name="Kukavica-Ibrulj I."/>
            <person name="Paradis-Bleau C."/>
            <person name="Sanschagrin F."/>
            <person name="Thomson N.R."/>
            <person name="Winsor G.L."/>
            <person name="Quail M.A."/>
            <person name="Lennard N."/>
            <person name="Bignell A."/>
            <person name="Clarke L."/>
            <person name="Seeger K."/>
            <person name="Saunders D."/>
            <person name="Harris D."/>
            <person name="Parkhill J."/>
            <person name="Hancock R.E.W."/>
            <person name="Brinkman F.S.L."/>
            <person name="Levesque R.C."/>
        </authorList>
    </citation>
    <scope>NUCLEOTIDE SEQUENCE [LARGE SCALE GENOMIC DNA]</scope>
    <source>
        <strain>LESB58</strain>
    </source>
</reference>
<comment type="function">
    <text evidence="1">Could be a mediator in iron transactions between iron acquisition and iron-requiring processes, such as synthesis and/or repair of Fe-S clusters in biosynthetic enzymes.</text>
</comment>
<comment type="similarity">
    <text evidence="1">Belongs to the Fe(2+)-trafficking protein family.</text>
</comment>
<sequence length="90" mass="10625">MSRTVMCRKYHEELPGLDRPPYPGAKGEDIYNNVSRKAWDEWQKHQTMLINERRLNMMNAEDRKFLQQEMDKFLSGEDYAKADGYVPPSA</sequence>
<gene>
    <name type="ordered locus">PLES_55391</name>
</gene>
<feature type="chain" id="PRO_1000131854" description="Probable Fe(2+)-trafficking protein">
    <location>
        <begin position="1"/>
        <end position="90"/>
    </location>
</feature>
<accession>B7V3P2</accession>
<name>FETP_PSEA8</name>
<evidence type="ECO:0000255" key="1">
    <source>
        <dbReference type="HAMAP-Rule" id="MF_00686"/>
    </source>
</evidence>
<protein>
    <recommendedName>
        <fullName evidence="1">Probable Fe(2+)-trafficking protein</fullName>
    </recommendedName>
</protein>